<feature type="chain" id="PRO_0000107697" description="Nucleotide-binding protein CA_C0511">
    <location>
        <begin position="1"/>
        <end position="294"/>
    </location>
</feature>
<feature type="binding site" evidence="1">
    <location>
        <begin position="8"/>
        <end position="15"/>
    </location>
    <ligand>
        <name>ATP</name>
        <dbReference type="ChEBI" id="CHEBI:30616"/>
    </ligand>
</feature>
<feature type="binding site" evidence="1">
    <location>
        <begin position="59"/>
        <end position="62"/>
    </location>
    <ligand>
        <name>GTP</name>
        <dbReference type="ChEBI" id="CHEBI:37565"/>
    </ligand>
</feature>
<name>Y511_CLOAB</name>
<comment type="function">
    <text evidence="1">Displays ATPase and GTPase activities.</text>
</comment>
<comment type="similarity">
    <text evidence="1">Belongs to the RapZ-like family.</text>
</comment>
<sequence>MRFVIVTGLSGAGKTQAIRSLEDLGYFCIDNLPPALIPKFAQVCYESESKINKIALVIDIRGGEFFDNLFESLKYLKEAGYKYEILFLDADNEVLIKRFKESRRKHPLAPNGRILNGIQMERKKLKTLYNMANNVIDTSKLATRELREKINSIYQEEGQIESKLIVTVVSFGFKYGIPVDSDLVFDVRFLPNPFYIPELKRFSGIEKPVKDYVMSFDQTKEFVNKIEQLLKFLIPNYLKEGKRQLIVSIGCTGGRHRSVTIANEIYERLKNDGETVNIDHRDIEEDINKGGKKL</sequence>
<dbReference type="EMBL" id="AE001437">
    <property type="protein sequence ID" value="AAK78491.1"/>
    <property type="molecule type" value="Genomic_DNA"/>
</dbReference>
<dbReference type="PIR" id="H96962">
    <property type="entry name" value="H96962"/>
</dbReference>
<dbReference type="RefSeq" id="NP_347151.1">
    <property type="nucleotide sequence ID" value="NC_003030.1"/>
</dbReference>
<dbReference type="SMR" id="Q97LP3"/>
<dbReference type="STRING" id="272562.CA_C0511"/>
<dbReference type="KEGG" id="cac:CA_C0511"/>
<dbReference type="PATRIC" id="fig|272562.8.peg.710"/>
<dbReference type="eggNOG" id="COG1660">
    <property type="taxonomic scope" value="Bacteria"/>
</dbReference>
<dbReference type="HOGENOM" id="CLU_059558_0_0_9"/>
<dbReference type="OrthoDB" id="9784461at2"/>
<dbReference type="Proteomes" id="UP000000814">
    <property type="component" value="Chromosome"/>
</dbReference>
<dbReference type="GO" id="GO:0005524">
    <property type="term" value="F:ATP binding"/>
    <property type="evidence" value="ECO:0007669"/>
    <property type="project" value="UniProtKB-UniRule"/>
</dbReference>
<dbReference type="GO" id="GO:0005525">
    <property type="term" value="F:GTP binding"/>
    <property type="evidence" value="ECO:0007669"/>
    <property type="project" value="UniProtKB-UniRule"/>
</dbReference>
<dbReference type="Gene3D" id="3.40.50.300">
    <property type="entry name" value="P-loop containing nucleotide triphosphate hydrolases"/>
    <property type="match status" value="1"/>
</dbReference>
<dbReference type="HAMAP" id="MF_00636">
    <property type="entry name" value="RapZ_like"/>
    <property type="match status" value="1"/>
</dbReference>
<dbReference type="InterPro" id="IPR027417">
    <property type="entry name" value="P-loop_NTPase"/>
</dbReference>
<dbReference type="InterPro" id="IPR005337">
    <property type="entry name" value="RapZ-like"/>
</dbReference>
<dbReference type="InterPro" id="IPR053930">
    <property type="entry name" value="RapZ-like_N"/>
</dbReference>
<dbReference type="InterPro" id="IPR053931">
    <property type="entry name" value="RapZ_C"/>
</dbReference>
<dbReference type="NCBIfam" id="NF003828">
    <property type="entry name" value="PRK05416.1"/>
    <property type="match status" value="1"/>
</dbReference>
<dbReference type="PANTHER" id="PTHR30448">
    <property type="entry name" value="RNASE ADAPTER PROTEIN RAPZ"/>
    <property type="match status" value="1"/>
</dbReference>
<dbReference type="PANTHER" id="PTHR30448:SF0">
    <property type="entry name" value="RNASE ADAPTER PROTEIN RAPZ"/>
    <property type="match status" value="1"/>
</dbReference>
<dbReference type="Pfam" id="PF22740">
    <property type="entry name" value="PapZ_C"/>
    <property type="match status" value="1"/>
</dbReference>
<dbReference type="Pfam" id="PF03668">
    <property type="entry name" value="RapZ-like_N"/>
    <property type="match status" value="1"/>
</dbReference>
<dbReference type="PIRSF" id="PIRSF005052">
    <property type="entry name" value="P-loopkin"/>
    <property type="match status" value="1"/>
</dbReference>
<dbReference type="SUPFAM" id="SSF52540">
    <property type="entry name" value="P-loop containing nucleoside triphosphate hydrolases"/>
    <property type="match status" value="1"/>
</dbReference>
<keyword id="KW-0067">ATP-binding</keyword>
<keyword id="KW-0342">GTP-binding</keyword>
<keyword id="KW-0547">Nucleotide-binding</keyword>
<keyword id="KW-1185">Reference proteome</keyword>
<accession>Q97LP3</accession>
<evidence type="ECO:0000255" key="1">
    <source>
        <dbReference type="HAMAP-Rule" id="MF_00636"/>
    </source>
</evidence>
<organism>
    <name type="scientific">Clostridium acetobutylicum (strain ATCC 824 / DSM 792 / JCM 1419 / IAM 19013 / LMG 5710 / NBRC 13948 / NRRL B-527 / VKM B-1787 / 2291 / W)</name>
    <dbReference type="NCBI Taxonomy" id="272562"/>
    <lineage>
        <taxon>Bacteria</taxon>
        <taxon>Bacillati</taxon>
        <taxon>Bacillota</taxon>
        <taxon>Clostridia</taxon>
        <taxon>Eubacteriales</taxon>
        <taxon>Clostridiaceae</taxon>
        <taxon>Clostridium</taxon>
    </lineage>
</organism>
<reference key="1">
    <citation type="journal article" date="2001" name="J. Bacteriol.">
        <title>Genome sequence and comparative analysis of the solvent-producing bacterium Clostridium acetobutylicum.</title>
        <authorList>
            <person name="Noelling J."/>
            <person name="Breton G."/>
            <person name="Omelchenko M.V."/>
            <person name="Makarova K.S."/>
            <person name="Zeng Q."/>
            <person name="Gibson R."/>
            <person name="Lee H.M."/>
            <person name="Dubois J."/>
            <person name="Qiu D."/>
            <person name="Hitti J."/>
            <person name="Wolf Y.I."/>
            <person name="Tatusov R.L."/>
            <person name="Sabathe F."/>
            <person name="Doucette-Stamm L.A."/>
            <person name="Soucaille P."/>
            <person name="Daly M.J."/>
            <person name="Bennett G.N."/>
            <person name="Koonin E.V."/>
            <person name="Smith D.R."/>
        </authorList>
    </citation>
    <scope>NUCLEOTIDE SEQUENCE [LARGE SCALE GENOMIC DNA]</scope>
    <source>
        <strain>ATCC 824 / DSM 792 / JCM 1419 / IAM 19013 / LMG 5710 / NBRC 13948 / NRRL B-527 / VKM B-1787 / 2291 / W</strain>
    </source>
</reference>
<protein>
    <recommendedName>
        <fullName evidence="1">Nucleotide-binding protein CA_C0511</fullName>
    </recommendedName>
</protein>
<gene>
    <name type="ordered locus">CA_C0511</name>
</gene>
<proteinExistence type="inferred from homology"/>